<feature type="transit peptide" description="Mitochondrion" evidence="1">
    <location>
        <begin position="1"/>
        <end position="43"/>
    </location>
</feature>
<feature type="chain" id="PRO_0000030512" description="Large ribosomal subunit protein uL2m">
    <location>
        <begin position="44"/>
        <end position="393"/>
    </location>
</feature>
<feature type="region of interest" description="Disordered" evidence="2">
    <location>
        <begin position="337"/>
        <end position="393"/>
    </location>
</feature>
<feature type="compositionally biased region" description="Basic residues" evidence="2">
    <location>
        <begin position="369"/>
        <end position="380"/>
    </location>
</feature>
<feature type="compositionally biased region" description="Basic and acidic residues" evidence="2">
    <location>
        <begin position="381"/>
        <end position="393"/>
    </location>
</feature>
<feature type="mutagenesis site" description="Loss of function." evidence="6">
    <location>
        <begin position="336"/>
        <end position="342"/>
    </location>
</feature>
<feature type="mutagenesis site" description="Causes a cold-sensitive respiratory growth defect. Does not impair assembly of the ribosomal subunit." evidence="6">
    <original>H</original>
    <variation>Q</variation>
    <location>
        <position position="343"/>
    </location>
</feature>
<accession>P32611</accession>
<accession>D3DLK0</accession>
<reference key="1">
    <citation type="journal article" date="1997" name="Nature">
        <title>The nucleotide sequence of Saccharomyces cerevisiae chromosome V.</title>
        <authorList>
            <person name="Dietrich F.S."/>
            <person name="Mulligan J.T."/>
            <person name="Hennessy K.M."/>
            <person name="Yelton M.A."/>
            <person name="Allen E."/>
            <person name="Araujo R."/>
            <person name="Aviles E."/>
            <person name="Berno A."/>
            <person name="Brennan T."/>
            <person name="Carpenter J."/>
            <person name="Chen E."/>
            <person name="Cherry J.M."/>
            <person name="Chung E."/>
            <person name="Duncan M."/>
            <person name="Guzman E."/>
            <person name="Hartzell G."/>
            <person name="Hunicke-Smith S."/>
            <person name="Hyman R.W."/>
            <person name="Kayser A."/>
            <person name="Komp C."/>
            <person name="Lashkari D."/>
            <person name="Lew H."/>
            <person name="Lin D."/>
            <person name="Mosedale D."/>
            <person name="Nakahara K."/>
            <person name="Namath A."/>
            <person name="Norgren R."/>
            <person name="Oefner P."/>
            <person name="Oh C."/>
            <person name="Petel F.X."/>
            <person name="Roberts D."/>
            <person name="Sehl P."/>
            <person name="Schramm S."/>
            <person name="Shogren T."/>
            <person name="Smith V."/>
            <person name="Taylor P."/>
            <person name="Wei Y."/>
            <person name="Botstein D."/>
            <person name="Davis R.W."/>
        </authorList>
    </citation>
    <scope>NUCLEOTIDE SEQUENCE [LARGE SCALE GENOMIC DNA]</scope>
    <source>
        <strain>ATCC 204508 / S288c</strain>
    </source>
</reference>
<reference key="2">
    <citation type="journal article" date="2014" name="G3 (Bethesda)">
        <title>The reference genome sequence of Saccharomyces cerevisiae: Then and now.</title>
        <authorList>
            <person name="Engel S.R."/>
            <person name="Dietrich F.S."/>
            <person name="Fisk D.G."/>
            <person name="Binkley G."/>
            <person name="Balakrishnan R."/>
            <person name="Costanzo M.C."/>
            <person name="Dwight S.S."/>
            <person name="Hitz B.C."/>
            <person name="Karra K."/>
            <person name="Nash R.S."/>
            <person name="Weng S."/>
            <person name="Wong E.D."/>
            <person name="Lloyd P."/>
            <person name="Skrzypek M.S."/>
            <person name="Miyasato S.R."/>
            <person name="Simison M."/>
            <person name="Cherry J.M."/>
        </authorList>
    </citation>
    <scope>GENOME REANNOTATION</scope>
    <source>
        <strain>ATCC 204508 / S288c</strain>
    </source>
</reference>
<reference key="3">
    <citation type="journal article" date="1997" name="J. Biol. Chem.">
        <title>Functional analysis of ribosomal protein L2 in yeast mitochondria.</title>
        <authorList>
            <person name="Pan C."/>
            <person name="Mason T.L."/>
        </authorList>
    </citation>
    <scope>FUNCTION</scope>
    <scope>SUBUNIT</scope>
    <scope>MUTAGENESIS OF 336-VAL--ASP-342 AND HIS-343</scope>
</reference>
<reference key="4">
    <citation type="journal article" date="1999" name="Biochim. Biophys. Acta">
        <title>A yeast strain defective in oleic acid utilization has a mutation in the RML2 gene.</title>
        <authorList>
            <person name="Trotter P.J."/>
            <person name="Hagerman R.A."/>
            <person name="Voelker D.R."/>
        </authorList>
    </citation>
    <scope>FUNCTION</scope>
</reference>
<reference key="5">
    <citation type="journal article" date="2001" name="Mol. Cell Biol. Res. Commun.">
        <title>A mutation in the yeast mitochondrial ribosomal protein Rml2p is associated with a defect in catalase gene expression.</title>
        <authorList>
            <person name="Hagerman R.A."/>
            <person name="Trotter P.J."/>
        </authorList>
    </citation>
    <scope>FUNCTION</scope>
</reference>
<reference key="6">
    <citation type="journal article" date="2003" name="Nature">
        <title>Global analysis of protein expression in yeast.</title>
        <authorList>
            <person name="Ghaemmaghami S."/>
            <person name="Huh W.-K."/>
            <person name="Bower K."/>
            <person name="Howson R.W."/>
            <person name="Belle A."/>
            <person name="Dephoure N."/>
            <person name="O'Shea E.K."/>
            <person name="Weissman J.S."/>
        </authorList>
    </citation>
    <scope>LEVEL OF PROTEIN EXPRESSION [LARGE SCALE ANALYSIS]</scope>
</reference>
<reference key="7">
    <citation type="journal article" date="2015" name="Nat. Commun.">
        <title>Organization of the mitochondrial translation machinery studied in situ by cryoelectron tomography.</title>
        <authorList>
            <person name="Pfeffer S."/>
            <person name="Woellhaf M.W."/>
            <person name="Herrmann J.M."/>
            <person name="Forster F."/>
        </authorList>
    </citation>
    <scope>SUBCELLULAR LOCATION</scope>
</reference>
<reference key="8">
    <citation type="journal article" date="2014" name="Science">
        <title>Structure of the yeast mitochondrial large ribosomal subunit.</title>
        <authorList>
            <person name="Amunts A."/>
            <person name="Brown A."/>
            <person name="Bai X.C."/>
            <person name="Llacer J.L."/>
            <person name="Hussain T."/>
            <person name="Emsley P."/>
            <person name="Long F."/>
            <person name="Murshudov G."/>
            <person name="Scheres S.H."/>
            <person name="Ramakrishnan V."/>
        </authorList>
    </citation>
    <scope>STRUCTURE BY ELECTRON MICROSCOPY (3.20 ANGSTROMS)</scope>
    <scope>SUBUNIT</scope>
    <scope>SUBCELLULAR LOCATION</scope>
</reference>
<organism>
    <name type="scientific">Saccharomyces cerevisiae (strain ATCC 204508 / S288c)</name>
    <name type="common">Baker's yeast</name>
    <dbReference type="NCBI Taxonomy" id="559292"/>
    <lineage>
        <taxon>Eukaryota</taxon>
        <taxon>Fungi</taxon>
        <taxon>Dikarya</taxon>
        <taxon>Ascomycota</taxon>
        <taxon>Saccharomycotina</taxon>
        <taxon>Saccharomycetes</taxon>
        <taxon>Saccharomycetales</taxon>
        <taxon>Saccharomycetaceae</taxon>
        <taxon>Saccharomyces</taxon>
    </lineage>
</organism>
<keyword id="KW-0002">3D-structure</keyword>
<keyword id="KW-0496">Mitochondrion</keyword>
<keyword id="KW-1185">Reference proteome</keyword>
<keyword id="KW-0687">Ribonucleoprotein</keyword>
<keyword id="KW-0689">Ribosomal protein</keyword>
<keyword id="KW-0809">Transit peptide</keyword>
<name>RML2_YEAST</name>
<dbReference type="EMBL" id="U18779">
    <property type="protein sequence ID" value="AAB64992.1"/>
    <property type="molecule type" value="Genomic_DNA"/>
</dbReference>
<dbReference type="EMBL" id="BK006939">
    <property type="protein sequence ID" value="DAA07604.1"/>
    <property type="molecule type" value="Genomic_DNA"/>
</dbReference>
<dbReference type="PIR" id="S30827">
    <property type="entry name" value="S30827"/>
</dbReference>
<dbReference type="RefSeq" id="NP_010864.3">
    <property type="nucleotide sequence ID" value="NM_001178865.3"/>
</dbReference>
<dbReference type="PDB" id="3J6B">
    <property type="method" value="EM"/>
    <property type="resolution" value="3.20 A"/>
    <property type="chains" value="B=1-393"/>
</dbReference>
<dbReference type="PDB" id="5MRC">
    <property type="method" value="EM"/>
    <property type="resolution" value="3.25 A"/>
    <property type="chains" value="B=1-393"/>
</dbReference>
<dbReference type="PDB" id="5MRE">
    <property type="method" value="EM"/>
    <property type="resolution" value="3.75 A"/>
    <property type="chains" value="B=1-393"/>
</dbReference>
<dbReference type="PDB" id="5MRF">
    <property type="method" value="EM"/>
    <property type="resolution" value="4.97 A"/>
    <property type="chains" value="B=1-393"/>
</dbReference>
<dbReference type="PDBsum" id="3J6B"/>
<dbReference type="PDBsum" id="5MRC"/>
<dbReference type="PDBsum" id="5MRE"/>
<dbReference type="PDBsum" id="5MRF"/>
<dbReference type="EMDB" id="EMD-3551"/>
<dbReference type="EMDB" id="EMD-3552"/>
<dbReference type="EMDB" id="EMD-3553"/>
<dbReference type="SMR" id="P32611"/>
<dbReference type="BioGRID" id="36679">
    <property type="interactions" value="569"/>
</dbReference>
<dbReference type="ComplexPortal" id="CPX-1602">
    <property type="entry name" value="54S mitochondrial large ribosomal subunit"/>
</dbReference>
<dbReference type="DIP" id="DIP-6812N"/>
<dbReference type="FunCoup" id="P32611">
    <property type="interactions" value="526"/>
</dbReference>
<dbReference type="IntAct" id="P32611">
    <property type="interactions" value="45"/>
</dbReference>
<dbReference type="MINT" id="P32611"/>
<dbReference type="STRING" id="4932.YEL050C"/>
<dbReference type="PaxDb" id="4932-YEL050C"/>
<dbReference type="PeptideAtlas" id="P32611"/>
<dbReference type="EnsemblFungi" id="YEL050C_mRNA">
    <property type="protein sequence ID" value="YEL050C"/>
    <property type="gene ID" value="YEL050C"/>
</dbReference>
<dbReference type="GeneID" id="856660"/>
<dbReference type="KEGG" id="sce:YEL050C"/>
<dbReference type="AGR" id="SGD:S000000776"/>
<dbReference type="SGD" id="S000000776">
    <property type="gene designation" value="RML2"/>
</dbReference>
<dbReference type="VEuPathDB" id="FungiDB:YEL050C"/>
<dbReference type="eggNOG" id="KOG0438">
    <property type="taxonomic scope" value="Eukaryota"/>
</dbReference>
<dbReference type="GeneTree" id="ENSGT00940000153244"/>
<dbReference type="HOGENOM" id="CLU_036235_3_1_1"/>
<dbReference type="InParanoid" id="P32611"/>
<dbReference type="OMA" id="TAQRGNC"/>
<dbReference type="OrthoDB" id="268576at2759"/>
<dbReference type="BioCyc" id="YEAST:G3O-30168-MONOMER"/>
<dbReference type="BioGRID-ORCS" id="856660">
    <property type="hits" value="4 hits in 10 CRISPR screens"/>
</dbReference>
<dbReference type="PRO" id="PR:P32611"/>
<dbReference type="Proteomes" id="UP000002311">
    <property type="component" value="Chromosome V"/>
</dbReference>
<dbReference type="RNAct" id="P32611">
    <property type="molecule type" value="protein"/>
</dbReference>
<dbReference type="GO" id="GO:0005743">
    <property type="term" value="C:mitochondrial inner membrane"/>
    <property type="evidence" value="ECO:0000303"/>
    <property type="project" value="ComplexPortal"/>
</dbReference>
<dbReference type="GO" id="GO:0005762">
    <property type="term" value="C:mitochondrial large ribosomal subunit"/>
    <property type="evidence" value="ECO:0000314"/>
    <property type="project" value="SGD"/>
</dbReference>
<dbReference type="GO" id="GO:0005739">
    <property type="term" value="C:mitochondrion"/>
    <property type="evidence" value="ECO:0007005"/>
    <property type="project" value="SGD"/>
</dbReference>
<dbReference type="GO" id="GO:0003723">
    <property type="term" value="F:RNA binding"/>
    <property type="evidence" value="ECO:0000318"/>
    <property type="project" value="GO_Central"/>
</dbReference>
<dbReference type="GO" id="GO:0003735">
    <property type="term" value="F:structural constituent of ribosome"/>
    <property type="evidence" value="ECO:0000314"/>
    <property type="project" value="SGD"/>
</dbReference>
<dbReference type="GO" id="GO:0016740">
    <property type="term" value="F:transferase activity"/>
    <property type="evidence" value="ECO:0007669"/>
    <property type="project" value="InterPro"/>
</dbReference>
<dbReference type="GO" id="GO:0032543">
    <property type="term" value="P:mitochondrial translation"/>
    <property type="evidence" value="ECO:0000315"/>
    <property type="project" value="SGD"/>
</dbReference>
<dbReference type="FunFam" id="2.30.30.30:FF:000034">
    <property type="entry name" value="50S ribosomal protein L2"/>
    <property type="match status" value="1"/>
</dbReference>
<dbReference type="FunFam" id="2.40.50.140:FF:000128">
    <property type="entry name" value="50S ribosomal protein L2"/>
    <property type="match status" value="1"/>
</dbReference>
<dbReference type="FunFam" id="4.10.950.10:FF:000001">
    <property type="entry name" value="50S ribosomal protein L2"/>
    <property type="match status" value="1"/>
</dbReference>
<dbReference type="Gene3D" id="2.30.30.30">
    <property type="match status" value="1"/>
</dbReference>
<dbReference type="Gene3D" id="2.40.50.140">
    <property type="entry name" value="Nucleic acid-binding proteins"/>
    <property type="match status" value="1"/>
</dbReference>
<dbReference type="Gene3D" id="4.10.950.10">
    <property type="entry name" value="Ribosomal protein L2, domain 3"/>
    <property type="match status" value="1"/>
</dbReference>
<dbReference type="InterPro" id="IPR012340">
    <property type="entry name" value="NA-bd_OB-fold"/>
</dbReference>
<dbReference type="InterPro" id="IPR014722">
    <property type="entry name" value="Rib_uL2_dom2"/>
</dbReference>
<dbReference type="InterPro" id="IPR002171">
    <property type="entry name" value="Ribosomal_uL2"/>
</dbReference>
<dbReference type="InterPro" id="IPR005880">
    <property type="entry name" value="Ribosomal_uL2_bac/org-type"/>
</dbReference>
<dbReference type="InterPro" id="IPR022669">
    <property type="entry name" value="Ribosomal_uL2_C"/>
</dbReference>
<dbReference type="InterPro" id="IPR022671">
    <property type="entry name" value="Ribosomal_uL2_CS"/>
</dbReference>
<dbReference type="InterPro" id="IPR014726">
    <property type="entry name" value="Ribosomal_uL2_dom3"/>
</dbReference>
<dbReference type="InterPro" id="IPR022666">
    <property type="entry name" value="Ribosomal_uL2_RNA-bd_dom"/>
</dbReference>
<dbReference type="InterPro" id="IPR008991">
    <property type="entry name" value="Translation_prot_SH3-like_sf"/>
</dbReference>
<dbReference type="NCBIfam" id="TIGR01171">
    <property type="entry name" value="rplB_bact"/>
    <property type="match status" value="1"/>
</dbReference>
<dbReference type="PANTHER" id="PTHR13691:SF5">
    <property type="entry name" value="LARGE RIBOSOMAL SUBUNIT PROTEIN UL2M"/>
    <property type="match status" value="1"/>
</dbReference>
<dbReference type="PANTHER" id="PTHR13691">
    <property type="entry name" value="RIBOSOMAL PROTEIN L2"/>
    <property type="match status" value="1"/>
</dbReference>
<dbReference type="Pfam" id="PF00181">
    <property type="entry name" value="Ribosomal_L2"/>
    <property type="match status" value="1"/>
</dbReference>
<dbReference type="Pfam" id="PF03947">
    <property type="entry name" value="Ribosomal_L2_C"/>
    <property type="match status" value="1"/>
</dbReference>
<dbReference type="SMART" id="SM01383">
    <property type="entry name" value="Ribosomal_L2"/>
    <property type="match status" value="1"/>
</dbReference>
<dbReference type="SMART" id="SM01382">
    <property type="entry name" value="Ribosomal_L2_C"/>
    <property type="match status" value="1"/>
</dbReference>
<dbReference type="SUPFAM" id="SSF50249">
    <property type="entry name" value="Nucleic acid-binding proteins"/>
    <property type="match status" value="1"/>
</dbReference>
<dbReference type="SUPFAM" id="SSF50104">
    <property type="entry name" value="Translation proteins SH3-like domain"/>
    <property type="match status" value="1"/>
</dbReference>
<dbReference type="PROSITE" id="PS00467">
    <property type="entry name" value="RIBOSOMAL_L2"/>
    <property type="match status" value="1"/>
</dbReference>
<sequence length="393" mass="43786">MLVLGSLRSALSCSSTASLISKRNPCYPYGILCRTLSQSVKLWQENTSKDDSSLNITPRLLKIIPNDTDIVTLEKQDELIKRRRKLSKEVTQMKRLKPVSPGLRWYRSPIYPYLYKGRPVRALTVVRKKHGGRNNSGKITVRHQGGGHRNRTRLIDFNRWEGGAQTVQRIEYDPGRSSHIALLKHNTTGELSYIIACDGLRPGDVVESFRRGIPQTLLNEMGGKVDPAILSVKTTQRGNCLPISMIPIGTIIHNVGITPVGPGKFCRSAGTYARVLAKLPEKKKAIVRLQSGEHRYVSLEAVATIGVVSNIDHQNRSLGKAGRSRWLGIRPTVRGVAMNKCDHPHGGGRGKSKSNKLSMSPWGQLAKGYKTRRGKNQNRMKVKDRPRGKDARL</sequence>
<proteinExistence type="evidence at protein level"/>
<protein>
    <recommendedName>
        <fullName evidence="7">Large ribosomal subunit protein uL2m</fullName>
    </recommendedName>
    <alternativeName>
        <fullName>54S ribosomal protein RML2, mitochondrial</fullName>
        <shortName>L2</shortName>
    </alternativeName>
</protein>
<evidence type="ECO:0000255" key="1"/>
<evidence type="ECO:0000256" key="2">
    <source>
        <dbReference type="SAM" id="MobiDB-lite"/>
    </source>
</evidence>
<evidence type="ECO:0000269" key="3">
    <source>
    </source>
</evidence>
<evidence type="ECO:0000269" key="4">
    <source>
    </source>
</evidence>
<evidence type="ECO:0000269" key="5">
    <source>
    </source>
</evidence>
<evidence type="ECO:0000269" key="6">
    <source>
    </source>
</evidence>
<evidence type="ECO:0000303" key="7">
    <source>
    </source>
</evidence>
<evidence type="ECO:0000305" key="8"/>
<evidence type="ECO:0000305" key="9">
    <source>
    </source>
</evidence>
<evidence type="ECO:0000305" key="10">
    <source>
    </source>
</evidence>
<gene>
    <name type="primary">RML2</name>
    <name type="ordered locus">YEL050C</name>
    <name type="ORF">SYGP-ORF37</name>
</gene>
<comment type="function">
    <text evidence="9 10">Component of the mitochondrial ribosome (mitoribosome), a dedicated translation machinery responsible for the synthesis of mitochondrial genome-encoded proteins, including at least some of the essential transmembrane subunits of the mitochondrial respiratory chain. The mitoribosomes are attached to the mitochondrial inner membrane and translation products are cotranslationally integrated into the membrane.</text>
</comment>
<comment type="subunit">
    <text evidence="4 6">Component of the mitochondrial large ribosomal subunit (mt-LSU). Mature yeast 74S mitochondrial ribosomes consist of a small (37S) and a large (54S) subunit. The 37S small subunit contains a 15S ribosomal RNA (15S mt-rRNA) and 34 different proteins. The 54S large subunit contains a 21S rRNA (21S mt-rRNA) and 46 different proteins. uL2m has a Na/K ligand binding site.</text>
</comment>
<comment type="subcellular location">
    <subcellularLocation>
        <location evidence="4">Mitochondrion</location>
    </subcellularLocation>
    <text evidence="5">Mitoribosomes are tethered to the mitochondrial inner membrane and spatially aligned with the membrane insertion machinery through two distinct membrane contact sites, formed by the 21S rRNA expansion segment 96-ES1 and the inner membrane protein MBA1.</text>
</comment>
<comment type="miscellaneous">
    <text evidence="3">Present with 1600 molecules/cell in log phase SD medium.</text>
</comment>
<comment type="similarity">
    <text evidence="8">Belongs to the universal ribosomal protein uL2 family.</text>
</comment>